<reference key="1">
    <citation type="journal article" date="1996" name="Biochem. Biophys. Res. Commun.">
        <title>Stac, a novel neuron-specific protein with cysteine-rich and SH3 domains.</title>
        <authorList>
            <person name="Suzuki H."/>
            <person name="Kawai J."/>
            <person name="Taga C."/>
            <person name="Yaoi T."/>
            <person name="Hara A."/>
            <person name="Hirose K."/>
            <person name="Hayashizaki Y."/>
            <person name="Watanabe S."/>
        </authorList>
    </citation>
    <scope>NUCLEOTIDE SEQUENCE [MRNA]</scope>
    <scope>TISSUE SPECIFICITY</scope>
    <scope>DEVELOPMENTAL STAGE</scope>
    <source>
        <strain>C3H/HeJ</strain>
        <tissue>Brain</tissue>
    </source>
</reference>
<reference key="2">
    <citation type="journal article" date="2013" name="Proc. Natl. Acad. Sci. U.S.A.">
        <title>Skeletal muscle-specific T-tubule protein STAC3 mediates voltage-induced Ca2+ release and contractility.</title>
        <authorList>
            <person name="Nelson B.R."/>
            <person name="Wu F."/>
            <person name="Liu Y."/>
            <person name="Anderson D.M."/>
            <person name="McAnally J."/>
            <person name="Lin W."/>
            <person name="Cannon S.C."/>
            <person name="Bassel-Duby R."/>
            <person name="Olson E.N."/>
        </authorList>
    </citation>
    <scope>TISSUE SPECIFICITY</scope>
</reference>
<reference key="3">
    <citation type="journal article" date="2016" name="Channels">
        <title>A Cav3.2/Stac1 molecular complex controls T-type channel expression at the plasma membrane.</title>
        <authorList>
            <person name="Rzhepetskyy Y."/>
            <person name="Lazniewska J."/>
            <person name="Proft J."/>
            <person name="Campiglio M."/>
            <person name="Flucher B.E."/>
            <person name="Weiss N."/>
        </authorList>
    </citation>
    <scope>INTERACTION WITH CACNA1H</scope>
    <scope>FUNCTION</scope>
</reference>
<reference key="4">
    <citation type="journal article" date="2017" name="Sci. Rep.">
        <title>STAC3 stably interacts through its C1 domain with CaV1.1 in skeletal muscle triads.</title>
        <authorList>
            <person name="Campiglio M."/>
            <person name="Flucher B.E."/>
        </authorList>
    </citation>
    <scope>SUBCELLULAR LOCATION</scope>
    <scope>INTERACTION WITH CACNA1C</scope>
</reference>
<reference key="5">
    <citation type="journal article" date="2018" name="J. Gen. Physiol.">
        <title>STAC proteins associate with the critical domain for excitation-contraction coupling in the II-III loop of CaV1.1.</title>
        <authorList>
            <person name="Polster A."/>
            <person name="Nelson B.R."/>
            <person name="Papadopoulos S."/>
            <person name="Olson E.N."/>
            <person name="Beam K.G."/>
        </authorList>
    </citation>
    <scope>FUNCTION</scope>
    <scope>INTERACTION WITH CACNA1S</scope>
    <scope>SUBCELLULAR LOCATION</scope>
</reference>
<reference key="6">
    <citation type="journal article" date="2018" name="Proc. Natl. Acad. Sci. U.S.A.">
        <title>STAC proteins associate to the IQ domain of CaV1.2 and inhibit calcium-dependent inactivation.</title>
        <authorList>
            <person name="Campiglio M."/>
            <person name="Coste de Bagneaux P."/>
            <person name="Ortner N.J."/>
            <person name="Tuluc P."/>
            <person name="Van Petegem F."/>
            <person name="Flucher B.E."/>
        </authorList>
    </citation>
    <scope>FUNCTION</scope>
    <scope>INTERACTION WITH CACNA1C</scope>
    <scope>SUBCELLULAR LOCATION</scope>
</reference>
<sequence>MIPPSGAREDSGDGLTGEATGTEQPPSPASTSSLESKLQKLKRSLSFKTKSLRSKSADNFFPRTNSDVKPQADLLAKASPGPSPIAIPGSPASMPTKAGLHPGSNSKLHAFQEHVFKKPTFCDVCNHMIVGTHAKHGLRCGACKMSIHHKCADGLAPQRCMGKLPKGFRRYYSSPLLIHEQFGCIKEVMPIACGNKVDPVYEALRFGTSLAQRTKKGGSGSGSDSPPRTSTSELVDVPEEADGPGDGSDMRTRSNSVFTYPENGMDDFRDQMKTTNHQGPLSKDPLQMNTYVALYRFIPQENEDLEMRPGDMITLLEDSNEDWWKGKIQDRVGFFPANFVQRVEEHEKIYRCVRTFIGCKDQGQITLKENQICVTSEEEQDGFIRVLSGKKRGLVPLDVLVDV</sequence>
<proteinExistence type="evidence at protein level"/>
<organism>
    <name type="scientific">Mus musculus</name>
    <name type="common">Mouse</name>
    <dbReference type="NCBI Taxonomy" id="10090"/>
    <lineage>
        <taxon>Eukaryota</taxon>
        <taxon>Metazoa</taxon>
        <taxon>Chordata</taxon>
        <taxon>Craniata</taxon>
        <taxon>Vertebrata</taxon>
        <taxon>Euteleostomi</taxon>
        <taxon>Mammalia</taxon>
        <taxon>Eutheria</taxon>
        <taxon>Euarchontoglires</taxon>
        <taxon>Glires</taxon>
        <taxon>Rodentia</taxon>
        <taxon>Myomorpha</taxon>
        <taxon>Muroidea</taxon>
        <taxon>Muridae</taxon>
        <taxon>Murinae</taxon>
        <taxon>Mus</taxon>
        <taxon>Mus</taxon>
    </lineage>
</organism>
<comment type="function">
    <text evidence="5 7 8">Promotes expression of the ion channel CACNA1H at the cell membrane, and thereby contributes to the regulation of channel activity (PubMed:27149520). Plays a minor and redundant role in promoting the expression of calcium channel CACNA1S at the cell membrane, and thereby contributes to increased channel activity (PubMed:29467163). Slows the rate of calcium-mediated inactivation of CACNA1C calcium channel activity (PubMed:29363593).</text>
</comment>
<comment type="subunit">
    <text evidence="5 7 8 13">Interacts (via SH3 domains) with CACNA1S (PubMed:29467163). Interacts with CACNA1H (PubMed:27149520). Interacts with CACNA1C (Probable) (PubMed:29363593).</text>
</comment>
<comment type="subcellular location">
    <subcellularLocation>
        <location evidence="6 8">Cytoplasm</location>
        <location evidence="6 8">Cytosol</location>
    </subcellularLocation>
    <subcellularLocation>
        <location evidence="8">Cell membrane</location>
        <topology evidence="8">Peripheral membrane protein</topology>
        <orientation evidence="8">Cytoplasmic side</orientation>
    </subcellularLocation>
    <subcellularLocation>
        <location evidence="7">Cell membrane</location>
        <location evidence="7">Sarcolemma</location>
        <topology evidence="7">Peripheral membrane protein</topology>
        <orientation evidence="7">Cytoplasmic side</orientation>
    </subcellularLocation>
</comment>
<comment type="tissue specificity">
    <text evidence="4 9">Expressed predominantly in brain (PubMed:8954993, PubMed:23818578) Detected in brain neurons, more specifically in hippocampus, cerebellum and inferior olive (PubMed:8954993). Highly expressed in urinary bladder, and detected at lower levels in adrenal gland (PubMed:23818578). Detected at very low levels in heart, liver, lung and kidney (PubMed:8954993).</text>
</comment>
<comment type="developmental stage">
    <text evidence="9">Expression in brain started at late 13.5 dpc and continued to adult (8W) with a peak around P10.</text>
</comment>
<accession>P97306</accession>
<name>STAC_MOUSE</name>
<feature type="chain" id="PRO_0000072236" description="SH3 and cysteine-rich domain-containing protein">
    <location>
        <begin position="1"/>
        <end position="403"/>
    </location>
</feature>
<feature type="domain" description="SH3 1" evidence="1">
    <location>
        <begin position="286"/>
        <end position="345"/>
    </location>
</feature>
<feature type="domain" description="SH3 2" evidence="1">
    <location>
        <begin position="348"/>
        <end position="403"/>
    </location>
</feature>
<feature type="zinc finger region" description="Phorbol-ester/DAG-type" evidence="2">
    <location>
        <begin position="108"/>
        <end position="160"/>
    </location>
</feature>
<feature type="region of interest" description="Disordered" evidence="3">
    <location>
        <begin position="1"/>
        <end position="51"/>
    </location>
</feature>
<feature type="region of interest" description="Disordered" evidence="3">
    <location>
        <begin position="212"/>
        <end position="264"/>
    </location>
</feature>
<feature type="compositionally biased region" description="Polar residues" evidence="3">
    <location>
        <begin position="19"/>
        <end position="36"/>
    </location>
</feature>
<feature type="compositionally biased region" description="Basic residues" evidence="3">
    <location>
        <begin position="39"/>
        <end position="51"/>
    </location>
</feature>
<feature type="compositionally biased region" description="Low complexity" evidence="3">
    <location>
        <begin position="222"/>
        <end position="232"/>
    </location>
</feature>
<keyword id="KW-1003">Cell membrane</keyword>
<keyword id="KW-0963">Cytoplasm</keyword>
<keyword id="KW-0472">Membrane</keyword>
<keyword id="KW-0479">Metal-binding</keyword>
<keyword id="KW-1185">Reference proteome</keyword>
<keyword id="KW-0677">Repeat</keyword>
<keyword id="KW-0728">SH3 domain</keyword>
<keyword id="KW-0862">Zinc</keyword>
<keyword id="KW-0863">Zinc-finger</keyword>
<evidence type="ECO:0000255" key="1">
    <source>
        <dbReference type="PROSITE-ProRule" id="PRU00192"/>
    </source>
</evidence>
<evidence type="ECO:0000255" key="2">
    <source>
        <dbReference type="PROSITE-ProRule" id="PRU00226"/>
    </source>
</evidence>
<evidence type="ECO:0000256" key="3">
    <source>
        <dbReference type="SAM" id="MobiDB-lite"/>
    </source>
</evidence>
<evidence type="ECO:0000269" key="4">
    <source>
    </source>
</evidence>
<evidence type="ECO:0000269" key="5">
    <source>
    </source>
</evidence>
<evidence type="ECO:0000269" key="6">
    <source>
    </source>
</evidence>
<evidence type="ECO:0000269" key="7">
    <source>
    </source>
</evidence>
<evidence type="ECO:0000269" key="8">
    <source>
    </source>
</evidence>
<evidence type="ECO:0000269" key="9">
    <source>
    </source>
</evidence>
<evidence type="ECO:0000303" key="10">
    <source>
    </source>
</evidence>
<evidence type="ECO:0000303" key="11">
    <source>
    </source>
</evidence>
<evidence type="ECO:0000303" key="12">
    <source>
    </source>
</evidence>
<evidence type="ECO:0000305" key="13">
    <source>
    </source>
</evidence>
<protein>
    <recommendedName>
        <fullName>SH3 and cysteine-rich domain-containing protein</fullName>
    </recommendedName>
    <alternativeName>
        <fullName>Src homology 3 and cysteine-rich domain-containing protein</fullName>
    </alternativeName>
</protein>
<gene>
    <name evidence="12" type="primary">Stac</name>
    <name evidence="10 11" type="synonym">Stac1</name>
</gene>
<dbReference type="EMBL" id="D86639">
    <property type="protein sequence ID" value="BAA13151.1"/>
    <property type="molecule type" value="mRNA"/>
</dbReference>
<dbReference type="CCDS" id="CCDS23586.1"/>
<dbReference type="PIR" id="JC5269">
    <property type="entry name" value="JC5269"/>
</dbReference>
<dbReference type="RefSeq" id="NP_058549.1">
    <property type="nucleotide sequence ID" value="NM_016853.4"/>
</dbReference>
<dbReference type="SMR" id="P97306"/>
<dbReference type="FunCoup" id="P97306">
    <property type="interactions" value="72"/>
</dbReference>
<dbReference type="STRING" id="10090.ENSMUSP00000035083"/>
<dbReference type="GlyGen" id="P97306">
    <property type="glycosylation" value="4 sites, 1 O-linked glycan (4 sites)"/>
</dbReference>
<dbReference type="iPTMnet" id="P97306"/>
<dbReference type="PhosphoSitePlus" id="P97306"/>
<dbReference type="PaxDb" id="10090-ENSMUSP00000035083"/>
<dbReference type="ProteomicsDB" id="258653"/>
<dbReference type="Antibodypedia" id="28130">
    <property type="antibodies" value="162 antibodies from 25 providers"/>
</dbReference>
<dbReference type="DNASU" id="20840"/>
<dbReference type="Ensembl" id="ENSMUST00000035083.8">
    <property type="protein sequence ID" value="ENSMUSP00000035083.8"/>
    <property type="gene ID" value="ENSMUSG00000032502.9"/>
</dbReference>
<dbReference type="GeneID" id="20840"/>
<dbReference type="KEGG" id="mmu:20840"/>
<dbReference type="UCSC" id="uc009rvw.1">
    <property type="organism name" value="mouse"/>
</dbReference>
<dbReference type="AGR" id="MGI:1201400"/>
<dbReference type="CTD" id="6769"/>
<dbReference type="MGI" id="MGI:1201400">
    <property type="gene designation" value="Stac"/>
</dbReference>
<dbReference type="VEuPathDB" id="HostDB:ENSMUSG00000032502"/>
<dbReference type="eggNOG" id="ENOG502QW0M">
    <property type="taxonomic scope" value="Eukaryota"/>
</dbReference>
<dbReference type="GeneTree" id="ENSGT00950000183092"/>
<dbReference type="HOGENOM" id="CLU_048120_2_0_1"/>
<dbReference type="InParanoid" id="P97306"/>
<dbReference type="OMA" id="IYRCVRT"/>
<dbReference type="OrthoDB" id="9991832at2759"/>
<dbReference type="PhylomeDB" id="P97306"/>
<dbReference type="TreeFam" id="TF332878"/>
<dbReference type="BioGRID-ORCS" id="20840">
    <property type="hits" value="1 hit in 77 CRISPR screens"/>
</dbReference>
<dbReference type="ChiTaRS" id="Stac">
    <property type="organism name" value="mouse"/>
</dbReference>
<dbReference type="PRO" id="PR:P97306"/>
<dbReference type="Proteomes" id="UP000000589">
    <property type="component" value="Chromosome 9"/>
</dbReference>
<dbReference type="RNAct" id="P97306">
    <property type="molecule type" value="protein"/>
</dbReference>
<dbReference type="Bgee" id="ENSMUSG00000032502">
    <property type="expression patterns" value="Expressed in lumbar dorsal root ganglion and 85 other cell types or tissues"/>
</dbReference>
<dbReference type="ExpressionAtlas" id="P97306">
    <property type="expression patterns" value="baseline and differential"/>
</dbReference>
<dbReference type="GO" id="GO:0009898">
    <property type="term" value="C:cytoplasmic side of plasma membrane"/>
    <property type="evidence" value="ECO:0000314"/>
    <property type="project" value="UniProtKB"/>
</dbReference>
<dbReference type="GO" id="GO:0005829">
    <property type="term" value="C:cytosol"/>
    <property type="evidence" value="ECO:0007669"/>
    <property type="project" value="UniProtKB-SubCell"/>
</dbReference>
<dbReference type="GO" id="GO:0030315">
    <property type="term" value="C:T-tubule"/>
    <property type="evidence" value="ECO:0000314"/>
    <property type="project" value="MGI"/>
</dbReference>
<dbReference type="GO" id="GO:0044325">
    <property type="term" value="F:transmembrane transporter binding"/>
    <property type="evidence" value="ECO:0000353"/>
    <property type="project" value="UniProtKB"/>
</dbReference>
<dbReference type="GO" id="GO:0008270">
    <property type="term" value="F:zinc ion binding"/>
    <property type="evidence" value="ECO:0007669"/>
    <property type="project" value="UniProtKB-KW"/>
</dbReference>
<dbReference type="GO" id="GO:0034605">
    <property type="term" value="P:cellular response to heat"/>
    <property type="evidence" value="ECO:0000314"/>
    <property type="project" value="MGI"/>
</dbReference>
<dbReference type="GO" id="GO:0006936">
    <property type="term" value="P:muscle contraction"/>
    <property type="evidence" value="ECO:0000315"/>
    <property type="project" value="MGI"/>
</dbReference>
<dbReference type="GO" id="GO:2001259">
    <property type="term" value="P:positive regulation of cation channel activity"/>
    <property type="evidence" value="ECO:0000315"/>
    <property type="project" value="UniProtKB"/>
</dbReference>
<dbReference type="GO" id="GO:1903078">
    <property type="term" value="P:positive regulation of protein localization to plasma membrane"/>
    <property type="evidence" value="ECO:0000315"/>
    <property type="project" value="UniProtKB"/>
</dbReference>
<dbReference type="GO" id="GO:1901387">
    <property type="term" value="P:positive regulation of voltage-gated calcium channel activity"/>
    <property type="evidence" value="ECO:0000315"/>
    <property type="project" value="UniProtKB"/>
</dbReference>
<dbReference type="CDD" id="cd11833">
    <property type="entry name" value="SH3_Stac_1"/>
    <property type="match status" value="1"/>
</dbReference>
<dbReference type="FunFam" id="3.30.60.20:FF:000044">
    <property type="entry name" value="SH3 and cysteine-rich domain-containing protein"/>
    <property type="match status" value="1"/>
</dbReference>
<dbReference type="FunFam" id="2.30.30.40:FF:000073">
    <property type="entry name" value="SH3 and cysteine-rich domain-containing protein 2"/>
    <property type="match status" value="1"/>
</dbReference>
<dbReference type="Gene3D" id="3.30.60.20">
    <property type="match status" value="1"/>
</dbReference>
<dbReference type="Gene3D" id="2.30.30.40">
    <property type="entry name" value="SH3 Domains"/>
    <property type="match status" value="1"/>
</dbReference>
<dbReference type="InterPro" id="IPR046349">
    <property type="entry name" value="C1-like_sf"/>
</dbReference>
<dbReference type="InterPro" id="IPR002219">
    <property type="entry name" value="PE/DAG-bd"/>
</dbReference>
<dbReference type="InterPro" id="IPR036028">
    <property type="entry name" value="SH3-like_dom_sf"/>
</dbReference>
<dbReference type="InterPro" id="IPR001452">
    <property type="entry name" value="SH3_domain"/>
</dbReference>
<dbReference type="InterPro" id="IPR039688">
    <property type="entry name" value="STAC1/2/3"/>
</dbReference>
<dbReference type="InterPro" id="IPR035508">
    <property type="entry name" value="STAC1_SH3"/>
</dbReference>
<dbReference type="PANTHER" id="PTHR15135:SF3">
    <property type="entry name" value="SH3 AND CYSTEINE-RICH DOMAIN-CONTAINING PROTEIN"/>
    <property type="match status" value="1"/>
</dbReference>
<dbReference type="PANTHER" id="PTHR15135">
    <property type="entry name" value="STAC"/>
    <property type="match status" value="1"/>
</dbReference>
<dbReference type="Pfam" id="PF00130">
    <property type="entry name" value="C1_1"/>
    <property type="match status" value="1"/>
</dbReference>
<dbReference type="Pfam" id="PF07653">
    <property type="entry name" value="SH3_2"/>
    <property type="match status" value="1"/>
</dbReference>
<dbReference type="Pfam" id="PF14604">
    <property type="entry name" value="SH3_9"/>
    <property type="match status" value="1"/>
</dbReference>
<dbReference type="Pfam" id="PF16664">
    <property type="entry name" value="STAC2_u1"/>
    <property type="match status" value="1"/>
</dbReference>
<dbReference type="PRINTS" id="PR00452">
    <property type="entry name" value="SH3DOMAIN"/>
</dbReference>
<dbReference type="PRINTS" id="PR01887">
    <property type="entry name" value="SPECTRNALPHA"/>
</dbReference>
<dbReference type="SMART" id="SM00109">
    <property type="entry name" value="C1"/>
    <property type="match status" value="1"/>
</dbReference>
<dbReference type="SMART" id="SM00326">
    <property type="entry name" value="SH3"/>
    <property type="match status" value="1"/>
</dbReference>
<dbReference type="SUPFAM" id="SSF57889">
    <property type="entry name" value="Cysteine-rich domain"/>
    <property type="match status" value="1"/>
</dbReference>
<dbReference type="SUPFAM" id="SSF50044">
    <property type="entry name" value="SH3-domain"/>
    <property type="match status" value="1"/>
</dbReference>
<dbReference type="PROSITE" id="PS50002">
    <property type="entry name" value="SH3"/>
    <property type="match status" value="2"/>
</dbReference>
<dbReference type="PROSITE" id="PS00479">
    <property type="entry name" value="ZF_DAG_PE_1"/>
    <property type="match status" value="1"/>
</dbReference>
<dbReference type="PROSITE" id="PS50081">
    <property type="entry name" value="ZF_DAG_PE_2"/>
    <property type="match status" value="1"/>
</dbReference>